<dbReference type="EMBL" id="EU126607">
    <property type="protein sequence ID" value="ABX56139.2"/>
    <property type="molecule type" value="Genomic_DNA"/>
</dbReference>
<dbReference type="SMR" id="A9LIW2"/>
<dbReference type="GO" id="GO:0031969">
    <property type="term" value="C:chloroplast membrane"/>
    <property type="evidence" value="ECO:0000304"/>
    <property type="project" value="UniProtKB"/>
</dbReference>
<dbReference type="GO" id="GO:0005886">
    <property type="term" value="C:plasma membrane"/>
    <property type="evidence" value="ECO:0007669"/>
    <property type="project" value="TreeGrafter"/>
</dbReference>
<dbReference type="GO" id="GO:0005227">
    <property type="term" value="F:calcium-activated cation channel activity"/>
    <property type="evidence" value="ECO:0007669"/>
    <property type="project" value="InterPro"/>
</dbReference>
<dbReference type="InterPro" id="IPR045122">
    <property type="entry name" value="Csc1-like"/>
</dbReference>
<dbReference type="InterPro" id="IPR003864">
    <property type="entry name" value="CSC1/OSCA1-like_7TM"/>
</dbReference>
<dbReference type="InterPro" id="IPR027815">
    <property type="entry name" value="CSC1/OSCA1-like_cyt"/>
</dbReference>
<dbReference type="InterPro" id="IPR032880">
    <property type="entry name" value="Csc1/OSCA1-like_N"/>
</dbReference>
<dbReference type="PANTHER" id="PTHR13018:SF100">
    <property type="entry name" value="CSC1-LIKE PROTEIN ERD4"/>
    <property type="match status" value="1"/>
</dbReference>
<dbReference type="PANTHER" id="PTHR13018">
    <property type="entry name" value="PROBABLE MEMBRANE PROTEIN DUF221-RELATED"/>
    <property type="match status" value="1"/>
</dbReference>
<dbReference type="Pfam" id="PF14703">
    <property type="entry name" value="PHM7_cyt"/>
    <property type="match status" value="1"/>
</dbReference>
<dbReference type="Pfam" id="PF02714">
    <property type="entry name" value="RSN1_7TM"/>
    <property type="match status" value="1"/>
</dbReference>
<dbReference type="Pfam" id="PF13967">
    <property type="entry name" value="RSN1_TM"/>
    <property type="match status" value="1"/>
</dbReference>
<feature type="chain" id="PRO_0000429813" description="CSC1-like protein ERD4">
    <location>
        <begin position="1"/>
        <end position="723"/>
    </location>
</feature>
<feature type="topological domain" description="Cytoplasmic" evidence="2">
    <location>
        <begin position="1"/>
        <end position="5"/>
    </location>
</feature>
<feature type="transmembrane region" description="Helical" evidence="2">
    <location>
        <begin position="6"/>
        <end position="26"/>
    </location>
</feature>
<feature type="topological domain" description="Extracellular" evidence="2">
    <location>
        <begin position="27"/>
        <end position="90"/>
    </location>
</feature>
<feature type="transmembrane region" description="Helical" evidence="2">
    <location>
        <begin position="91"/>
        <end position="111"/>
    </location>
</feature>
<feature type="topological domain" description="Cytoplasmic" evidence="2">
    <location>
        <begin position="112"/>
        <end position="148"/>
    </location>
</feature>
<feature type="transmembrane region" description="Helical" evidence="2">
    <location>
        <begin position="149"/>
        <end position="169"/>
    </location>
</feature>
<feature type="topological domain" description="Extracellular" evidence="2">
    <location>
        <begin position="170"/>
        <end position="364"/>
    </location>
</feature>
<feature type="transmembrane region" description="Helical" evidence="2">
    <location>
        <begin position="365"/>
        <end position="385"/>
    </location>
</feature>
<feature type="topological domain" description="Cytoplasmic" evidence="2">
    <location>
        <begin position="386"/>
        <end position="416"/>
    </location>
</feature>
<feature type="transmembrane region" description="Helical" evidence="2">
    <location>
        <begin position="417"/>
        <end position="437"/>
    </location>
</feature>
<feature type="topological domain" description="Extracellular" evidence="2">
    <location>
        <begin position="438"/>
        <end position="456"/>
    </location>
</feature>
<feature type="transmembrane region" description="Helical" evidence="2">
    <location>
        <begin position="457"/>
        <end position="477"/>
    </location>
</feature>
<feature type="topological domain" description="Cytoplasmic" evidence="2">
    <location>
        <begin position="478"/>
        <end position="508"/>
    </location>
</feature>
<feature type="transmembrane region" description="Helical" evidence="2">
    <location>
        <begin position="509"/>
        <end position="529"/>
    </location>
</feature>
<feature type="topological domain" description="Extracellular" evidence="2">
    <location>
        <begin position="530"/>
        <end position="572"/>
    </location>
</feature>
<feature type="transmembrane region" description="Helical" evidence="2">
    <location>
        <begin position="573"/>
        <end position="593"/>
    </location>
</feature>
<feature type="topological domain" description="Cytoplasmic" evidence="2">
    <location>
        <begin position="594"/>
        <end position="614"/>
    </location>
</feature>
<feature type="transmembrane region" description="Helical" evidence="2">
    <location>
        <begin position="615"/>
        <end position="635"/>
    </location>
</feature>
<feature type="topological domain" description="Extracellular" evidence="2">
    <location>
        <begin position="636"/>
        <end position="637"/>
    </location>
</feature>
<feature type="transmembrane region" description="Helical" evidence="2">
    <location>
        <begin position="638"/>
        <end position="658"/>
    </location>
</feature>
<feature type="topological domain" description="Cytoplasmic" evidence="2">
    <location>
        <begin position="659"/>
        <end position="723"/>
    </location>
</feature>
<proteinExistence type="inferred from homology"/>
<accession>A9LIW2</accession>
<comment type="function">
    <text evidence="1 3">Acts as an osmosensitive calcium-permeable cation channel.</text>
</comment>
<comment type="subcellular location">
    <subcellularLocation>
        <location evidence="5">Plastid</location>
        <location evidence="5">Chloroplast membrane</location>
        <topology evidence="5">Multi-pass membrane protein</topology>
    </subcellularLocation>
</comment>
<comment type="similarity">
    <text evidence="4">Belongs to the CSC1 (TC 1.A.17) family.</text>
</comment>
<comment type="caution">
    <text evidence="5">Was originally thought to possess 2 RRM (RNA recognition motif) domains and to bind RNA (PubMed:22431979). It seems to be in disagreement with the supposed ion transporter function.</text>
</comment>
<keyword id="KW-0106">Calcium</keyword>
<keyword id="KW-0150">Chloroplast</keyword>
<keyword id="KW-0407">Ion channel</keyword>
<keyword id="KW-0406">Ion transport</keyword>
<keyword id="KW-0472">Membrane</keyword>
<keyword id="KW-0934">Plastid</keyword>
<keyword id="KW-0812">Transmembrane</keyword>
<keyword id="KW-1133">Transmembrane helix</keyword>
<keyword id="KW-0813">Transport</keyword>
<sequence>MEFASFLVSLGTSAIIFVVLMFLFTWLSRRPGNVPVYYPNRILKGMDPWEGSSLTRNPFAWIREAFTSTEQDVVKLSGVDTAVYFVFQSTVLGIFALSALLLLPTLLPIAATDNNLETSRSATDTTSNGTFSQLDNLSMANITKSSSRLWAFLGAVYWVSVVTYFMLWKAYKHVAALRAQALMTSEEVLPEQFAILVRDIPSPPNGETQKEFVDSYFRDIYPETFYRSLVVTENSKINKIWEDLEGYKKKLARAEAAFAATSNRPTNKTGLLGLVGERVDSIDYYTKLINESVAKLEAEQRTVLAERQQTAAVVFFTDRVTAALAAQSLHCQMVDKWTVTEAPEPRQLIWENLKIKFFSRIVRQYVIYFLVAITILFYMIPIAFVSAITTLANLQKALPFLKPIVDIAFIRTILESYLPQIALIVFLAMLPKFLMFLSKSEGIPSQSHAIRATSGKYFYFSVLNVFIGVTLAGSLFENLKALEEKPNSFITLLATSLPKSATFFLTYVALKFFVGYGLELSRIIPLIIFHLKKKYLCKTEAEVKEAWYPGDLSYATRVPSDMLILTITFCYSVIAPLILVFGVIYFGLGWLILRNQALKVYVPSYESYGRMWPHIHTRILAALFLFQLVMFGYLGVKIFVWAILLVPLIFISLIFGYVCRQKFYGGFEHTALEVACRELKQRPDLEEVFRAYIPHSLSTHKGDDHQFKGAMSRYQDYAAISAA</sequence>
<organism>
    <name type="scientific">Brassica juncea</name>
    <name type="common">Indian mustard</name>
    <name type="synonym">Sinapis juncea</name>
    <dbReference type="NCBI Taxonomy" id="3707"/>
    <lineage>
        <taxon>Eukaryota</taxon>
        <taxon>Viridiplantae</taxon>
        <taxon>Streptophyta</taxon>
        <taxon>Embryophyta</taxon>
        <taxon>Tracheophyta</taxon>
        <taxon>Spermatophyta</taxon>
        <taxon>Magnoliopsida</taxon>
        <taxon>eudicotyledons</taxon>
        <taxon>Gunneridae</taxon>
        <taxon>Pentapetalae</taxon>
        <taxon>rosids</taxon>
        <taxon>malvids</taxon>
        <taxon>Brassicales</taxon>
        <taxon>Brassicaceae</taxon>
        <taxon>Brassiceae</taxon>
        <taxon>Brassica</taxon>
    </lineage>
</organism>
<name>CSC1L_BRAJU</name>
<evidence type="ECO:0000250" key="1"/>
<evidence type="ECO:0000255" key="2"/>
<evidence type="ECO:0000269" key="3">
    <source>
    </source>
</evidence>
<evidence type="ECO:0000305" key="4"/>
<evidence type="ECO:0000305" key="5">
    <source>
    </source>
</evidence>
<gene>
    <name type="primary">ERD4</name>
</gene>
<protein>
    <recommendedName>
        <fullName>CSC1-like protein ERD4</fullName>
    </recommendedName>
    <alternativeName>
        <fullName>Protein EARLY-RESPONSIVE TO DEHYDRATION STRESS 4</fullName>
    </alternativeName>
</protein>
<reference key="1">
    <citation type="submission" date="2011-04" db="EMBL/GenBank/DDBJ databases">
        <title>Cloning and characterization of early responsive to dehydration 4 gene from Indian mustard (Brassica juncea).</title>
        <authorList>
            <person name="Archana K."/>
            <person name="Patade V.Y."/>
            <person name="Suprasanna P."/>
        </authorList>
    </citation>
    <scope>NUCLEOTIDE SEQUENCE [GENOMIC DNA]</scope>
    <source>
        <strain>cv. CS52</strain>
    </source>
</reference>
<reference key="2">
    <citation type="journal article" date="2012" name="PLoS ONE">
        <title>Membrane topology and predicted RNA-binding function of the 'early responsive to dehydration (ERD4)' plant protein.</title>
        <authorList>
            <person name="Rai A."/>
            <person name="Suprasanna P."/>
            <person name="D'Souza S.F."/>
            <person name="Kumar V."/>
        </authorList>
    </citation>
    <scope>FUNCTION</scope>
    <scope>SUBCELLULAR LOCATION</scope>
</reference>